<comment type="function">
    <text evidence="1 7">Dermonecrotic toxins cleave the phosphodiester linkage between the phosphate and headgroup of certain phospholipids (sphingolipid and lysolipid substrates), forming an alcohol (often choline) and a cyclic phosphate (By similarity). This toxin acts on sphingomyelin (SM) (PubMed:15234562, PubMed:9790962). It may also act on ceramide phosphoethanolamine (CPE), lysophosphatidylcholine (LPC) and lysophosphatidylethanolamine (LPE), but not on lysophosphatidylserine (LPS), and lysophosphatidylglycerol (LPG) (By similarity). It acts by transphosphatidylation, releasing exclusively cyclic phosphate products as second products (By similarity). It induces complement-dependent hemolysis, dermonecrosis, vascular permeability and platelet aggregation (PubMed:15234562, PubMed:9790962).</text>
</comment>
<comment type="catalytic activity">
    <reaction evidence="10">
        <text>an N-(acyl)-sphingosylphosphocholine = an N-(acyl)-sphingosyl-1,3-cyclic phosphate + choline</text>
        <dbReference type="Rhea" id="RHEA:60652"/>
        <dbReference type="ChEBI" id="CHEBI:15354"/>
        <dbReference type="ChEBI" id="CHEBI:64583"/>
        <dbReference type="ChEBI" id="CHEBI:143892"/>
    </reaction>
</comment>
<comment type="catalytic activity">
    <reaction evidence="1">
        <text>an N-(acyl)-sphingosylphosphoethanolamine = an N-(acyl)-sphingosyl-1,3-cyclic phosphate + ethanolamine</text>
        <dbReference type="Rhea" id="RHEA:60648"/>
        <dbReference type="ChEBI" id="CHEBI:57603"/>
        <dbReference type="ChEBI" id="CHEBI:143891"/>
        <dbReference type="ChEBI" id="CHEBI:143892"/>
    </reaction>
</comment>
<comment type="catalytic activity">
    <reaction evidence="1">
        <text>a 1-acyl-sn-glycero-3-phosphocholine = a 1-acyl-sn-glycero-2,3-cyclic phosphate + choline</text>
        <dbReference type="Rhea" id="RHEA:60700"/>
        <dbReference type="ChEBI" id="CHEBI:15354"/>
        <dbReference type="ChEBI" id="CHEBI:58168"/>
        <dbReference type="ChEBI" id="CHEBI:143947"/>
    </reaction>
</comment>
<comment type="catalytic activity">
    <reaction evidence="1">
        <text>a 1-acyl-sn-glycero-3-phosphoethanolamine = a 1-acyl-sn-glycero-2,3-cyclic phosphate + ethanolamine</text>
        <dbReference type="Rhea" id="RHEA:60704"/>
        <dbReference type="ChEBI" id="CHEBI:57603"/>
        <dbReference type="ChEBI" id="CHEBI:64381"/>
        <dbReference type="ChEBI" id="CHEBI:143947"/>
    </reaction>
</comment>
<comment type="cofactor">
    <cofactor evidence="5">
        <name>Mg(2+)</name>
        <dbReference type="ChEBI" id="CHEBI:18420"/>
    </cofactor>
    <text evidence="5">Binds 1 Mg(2+) ion per subunit.</text>
</comment>
<comment type="subcellular location">
    <subcellularLocation>
        <location evidence="7">Secreted</location>
    </subcellularLocation>
</comment>
<comment type="tissue specificity">
    <text evidence="10">Expressed by the venom gland.</text>
</comment>
<comment type="similarity">
    <text evidence="9">Belongs to the arthropod phospholipase D family. Class II subfamily. Class IIa sub-subfamily.</text>
</comment>
<comment type="caution">
    <text evidence="1 2 4">The most common activity assay for dermonecrotic toxins detects enzymatic activity by monitoring choline release from substrate. Liberation of choline from sphingomyelin (SM) or lysophosphatidylcholine (LPC) is commonly assumed to result from substrate hydrolysis, giving either ceramide-1-phosphate (C1P) or lysophosphatidic acid (LPA), respectively, as a second product. However, two studies from Lajoie and colleagues (2013 and 2015) report the observation of exclusive formation of cyclic phosphate products as second products, resulting from intramolecular transphosphatidylation. Cyclic phosphates have vastly different biological properties from their monoester counterparts, and they may be relevant to the pathology of brown spider envenomation.</text>
</comment>
<comment type="sequence caution" evidence="9">
    <conflict type="erroneous initiation">
        <sequence resource="EMBL-CDS" id="AAP97092"/>
    </conflict>
    <text>Truncated N-terminus.</text>
</comment>
<accession>P0CE83</accession>
<accession>P83046</accession>
<accession>Q2XQV2</accession>
<accession>Q6W8Q4</accession>
<organism>
    <name type="scientific">Loxosceles intermedia</name>
    <name type="common">Brown spider</name>
    <dbReference type="NCBI Taxonomy" id="58218"/>
    <lineage>
        <taxon>Eukaryota</taxon>
        <taxon>Metazoa</taxon>
        <taxon>Ecdysozoa</taxon>
        <taxon>Arthropoda</taxon>
        <taxon>Chelicerata</taxon>
        <taxon>Arachnida</taxon>
        <taxon>Araneae</taxon>
        <taxon>Araneomorphae</taxon>
        <taxon>Haplogynae</taxon>
        <taxon>Scytodoidea</taxon>
        <taxon>Sicariidae</taxon>
        <taxon>Loxosceles</taxon>
    </lineage>
</organism>
<protein>
    <recommendedName>
        <fullName>Dermonecrotic toxin LiSicTox-alphaIA2ai</fullName>
        <ecNumber evidence="4">4.6.1.-</ecNumber>
    </recommendedName>
    <alternativeName>
        <fullName>LiP2</fullName>
        <shortName evidence="8">P2</shortName>
    </alternativeName>
    <alternativeName>
        <fullName>Phospholipase D</fullName>
        <shortName>PLD</shortName>
    </alternativeName>
    <alternativeName>
        <fullName>Sphingomyelin phosphodiesterase D 2</fullName>
        <shortName>SMD 2</shortName>
        <shortName>SMase D 2</shortName>
        <shortName>Sphingomyelinase D 2</shortName>
    </alternativeName>
</protein>
<feature type="signal peptide" evidence="6">
    <location>
        <begin position="1"/>
        <end position="18"/>
    </location>
</feature>
<feature type="propeptide" id="PRO_0000035581" evidence="7">
    <location>
        <begin position="19"/>
        <end position="26"/>
    </location>
</feature>
<feature type="chain" id="PRO_0000035582" description="Dermonecrotic toxin LiSicTox-alphaIA2ai">
    <location>
        <begin position="27"/>
        <end position="306"/>
    </location>
</feature>
<feature type="active site" evidence="5">
    <location>
        <position position="38"/>
    </location>
</feature>
<feature type="active site" description="Nucleophile" evidence="5">
    <location>
        <position position="74"/>
    </location>
</feature>
<feature type="binding site" evidence="5">
    <location>
        <position position="58"/>
    </location>
    <ligand>
        <name>Mg(2+)</name>
        <dbReference type="ChEBI" id="CHEBI:18420"/>
    </ligand>
</feature>
<feature type="binding site" evidence="5">
    <location>
        <position position="60"/>
    </location>
    <ligand>
        <name>Mg(2+)</name>
        <dbReference type="ChEBI" id="CHEBI:18420"/>
    </ligand>
</feature>
<feature type="binding site" evidence="5">
    <location>
        <position position="118"/>
    </location>
    <ligand>
        <name>Mg(2+)</name>
        <dbReference type="ChEBI" id="CHEBI:18420"/>
    </ligand>
</feature>
<feature type="glycosylation site" description="N-linked (GlcNAc...) asparagine" evidence="6">
    <location>
        <position position="283"/>
    </location>
</feature>
<feature type="disulfide bond" evidence="3">
    <location>
        <begin position="78"/>
        <end position="84"/>
    </location>
</feature>
<feature type="disulfide bond" evidence="3">
    <location>
        <begin position="80"/>
        <end position="223"/>
    </location>
</feature>
<evidence type="ECO:0000250" key="1">
    <source>
        <dbReference type="UniProtKB" id="A0A0D4WTV1"/>
    </source>
</evidence>
<evidence type="ECO:0000250" key="2">
    <source>
        <dbReference type="UniProtKB" id="A0A0D4WV12"/>
    </source>
</evidence>
<evidence type="ECO:0000250" key="3">
    <source>
        <dbReference type="UniProtKB" id="P0CE80"/>
    </source>
</evidence>
<evidence type="ECO:0000250" key="4">
    <source>
        <dbReference type="UniProtKB" id="Q4ZFU2"/>
    </source>
</evidence>
<evidence type="ECO:0000250" key="5">
    <source>
        <dbReference type="UniProtKB" id="Q8I914"/>
    </source>
</evidence>
<evidence type="ECO:0000255" key="6"/>
<evidence type="ECO:0000269" key="7">
    <source>
    </source>
</evidence>
<evidence type="ECO:0000303" key="8">
    <source>
    </source>
</evidence>
<evidence type="ECO:0000305" key="9"/>
<evidence type="ECO:0000305" key="10">
    <source>
    </source>
</evidence>
<keyword id="KW-0204">Cytolysis</keyword>
<keyword id="KW-1061">Dermonecrotic toxin</keyword>
<keyword id="KW-0903">Direct protein sequencing</keyword>
<keyword id="KW-1015">Disulfide bond</keyword>
<keyword id="KW-0325">Glycoprotein</keyword>
<keyword id="KW-0354">Hemolysis</keyword>
<keyword id="KW-0442">Lipid degradation</keyword>
<keyword id="KW-0443">Lipid metabolism</keyword>
<keyword id="KW-0456">Lyase</keyword>
<keyword id="KW-0460">Magnesium</keyword>
<keyword id="KW-0479">Metal-binding</keyword>
<keyword id="KW-0964">Secreted</keyword>
<keyword id="KW-0732">Signal</keyword>
<keyword id="KW-0800">Toxin</keyword>
<keyword id="KW-0865">Zymogen</keyword>
<name>A1IA1_LOXIN</name>
<reference key="1">
    <citation type="journal article" date="2004" name="Mol. Immunol.">
        <title>Molecular cloning, expression, function and immunoreactivities of members of a gene family of sphingomyelinases from Loxosceles venom glands.</title>
        <authorList>
            <person name="Tambourgi D.V."/>
            <person name="Fernandes-Pedrosa M.F."/>
            <person name="Van Den Berg C.W."/>
            <person name="Goncalves-de-Andrade R.M."/>
            <person name="Ferracini M."/>
            <person name="Paixao-Cavalcante D."/>
            <person name="Morgan B.P."/>
            <person name="Rushmere N.K."/>
        </authorList>
    </citation>
    <scope>NUCLEOTIDE SEQUENCE [MRNA]</scope>
    <scope>FUNCTION</scope>
    <scope>CATALYTIC ACTIVITY</scope>
    <scope>BIOASSAY</scope>
    <source>
        <tissue>Venom gland</tissue>
    </source>
</reference>
<reference key="2">
    <citation type="journal article" date="1998" name="Biochem. Biophys. Res. Commun.">
        <title>Sphingomyelinases in the venom of the spider Loxosceles intermedia are responsible for both dermonecrosis and complement-dependent hemolysis.</title>
        <authorList>
            <person name="Tambourgi D.V."/>
            <person name="Magnoli F.C."/>
            <person name="van den Berg C.W."/>
            <person name="Morgan B.P."/>
            <person name="de Araujo P.S."/>
            <person name="Alves E.W."/>
            <person name="Da Silva W.D."/>
        </authorList>
    </citation>
    <scope>PROTEIN SEQUENCE OF 27-55</scope>
    <scope>FUNCTION</scope>
    <scope>CATALYTIC ACTIVITY</scope>
    <scope>SUBCELLULAR LOCATION</scope>
    <source>
        <tissue>Venom</tissue>
    </source>
</reference>
<proteinExistence type="evidence at protein level"/>
<dbReference type="EC" id="4.6.1.-" evidence="4"/>
<dbReference type="EMBL" id="AY304472">
    <property type="protein sequence ID" value="AAP97092.2"/>
    <property type="status" value="ALT_INIT"/>
    <property type="molecule type" value="mRNA"/>
</dbReference>
<dbReference type="SMR" id="P0CE83"/>
<dbReference type="BRENDA" id="3.1.4.4">
    <property type="organism ID" value="8287"/>
</dbReference>
<dbReference type="BRENDA" id="3.1.4.41">
    <property type="organism ID" value="8287"/>
</dbReference>
<dbReference type="GO" id="GO:0005576">
    <property type="term" value="C:extracellular region"/>
    <property type="evidence" value="ECO:0007669"/>
    <property type="project" value="UniProtKB-SubCell"/>
</dbReference>
<dbReference type="GO" id="GO:0016829">
    <property type="term" value="F:lyase activity"/>
    <property type="evidence" value="ECO:0007669"/>
    <property type="project" value="UniProtKB-KW"/>
</dbReference>
<dbReference type="GO" id="GO:0046872">
    <property type="term" value="F:metal ion binding"/>
    <property type="evidence" value="ECO:0007669"/>
    <property type="project" value="UniProtKB-KW"/>
</dbReference>
<dbReference type="GO" id="GO:0008081">
    <property type="term" value="F:phosphoric diester hydrolase activity"/>
    <property type="evidence" value="ECO:0007669"/>
    <property type="project" value="InterPro"/>
</dbReference>
<dbReference type="GO" id="GO:0090729">
    <property type="term" value="F:toxin activity"/>
    <property type="evidence" value="ECO:0007669"/>
    <property type="project" value="UniProtKB-KW"/>
</dbReference>
<dbReference type="GO" id="GO:0031640">
    <property type="term" value="P:killing of cells of another organism"/>
    <property type="evidence" value="ECO:0007669"/>
    <property type="project" value="UniProtKB-KW"/>
</dbReference>
<dbReference type="GO" id="GO:0016042">
    <property type="term" value="P:lipid catabolic process"/>
    <property type="evidence" value="ECO:0007669"/>
    <property type="project" value="UniProtKB-KW"/>
</dbReference>
<dbReference type="CDD" id="cd08576">
    <property type="entry name" value="GDPD_like_SMaseD_PLD"/>
    <property type="match status" value="1"/>
</dbReference>
<dbReference type="Gene3D" id="3.20.20.190">
    <property type="entry name" value="Phosphatidylinositol (PI) phosphodiesterase"/>
    <property type="match status" value="1"/>
</dbReference>
<dbReference type="InterPro" id="IPR017946">
    <property type="entry name" value="PLC-like_Pdiesterase_TIM-brl"/>
</dbReference>
<dbReference type="Pfam" id="PF13653">
    <property type="entry name" value="GDPD_2"/>
    <property type="match status" value="1"/>
</dbReference>
<dbReference type="SUPFAM" id="SSF51695">
    <property type="entry name" value="PLC-like phosphodiesterases"/>
    <property type="match status" value="1"/>
</dbReference>
<sequence length="306" mass="34138">MLPYIALILVCWSVLSQAAQTDVEGRADKRRPIWIMGHMVNAIAQIDEFVNLGANSIETDVSFDDNANPEYTYHGIPCDCGRSCLKWENFNDFLKGLRSATTPGNAKYQAKLILVVFDLKTGSLYDNQANEAGKKLAKNLLKHYWNNGNNGGRAYIVLSIPDLNHYPLIKGFKDQLTQDGHPELMDKVGHDFSGNDAIGDVGNAYKKAGISGHVWQSDGITNCLLRGLDRVKQATANRDSANGFINKVYYWTVDKRATTRDALDAGVDGVMTNYPDVITDVLNESAYKNKFRVASYEDNPWETFKK</sequence>